<comment type="function">
    <text>Binds to oocyte zona pellucida in vivo. May play a role in the fertilization process and/or early embryonic development.</text>
</comment>
<comment type="subcellular location">
    <subcellularLocation>
        <location>Cytoplasmic vesicle</location>
        <location>Secretory vesicle</location>
    </subcellularLocation>
    <text>Secretory granules.</text>
</comment>
<comment type="tissue specificity">
    <text>Oviduct.</text>
</comment>
<comment type="developmental stage">
    <text>Levels are highest in the fimbria and ampulla at estrus and on day 1 of pregnancy, when gamete transport and fertilization occurs in the E2-dominated fallopian tube. Levels decline significantly on day 2 and undergo a further significant reduction on day 3 of pregnancy coincident with transport of the embryo from the oviduct to the uterus, a reproductive stage associated with rising progesterone levels.</text>
</comment>
<comment type="similarity">
    <text evidence="5">Belongs to the glycosyl hydrolase 18 family.</text>
</comment>
<sequence length="539" mass="59536">MGKLLLWVGLLLMLKHHDGAAHKLVCYFTNWAFSRPGSASILPRDLDPFLCTHLVFAFASMNNNQIVPKDPLDEKILYPEFNKLKERNRGLKTLLSVGGWNFGTSRFTKMLSTFSNRERFVKSVIALLRTHGFDGLDLFFLYPGLRGSPARDRWTFVFLLEELLQAFKNEAQLTMRPRLLLSAAVSGDPHVIQKAYDARLLGRLLDFISVLSYDLHGSWEKVTGHNSPLFSLPGDPKSSAYAMSYWRQLGVPPEKLLMGLPTYGRTFHLLRASQNELGAGAAGPASPGKYTKQAGFLAYYEVCSFVQRAKKRWINDQYVPYAFKGKEWVGYDDAISFGYKAFFIKREHFGGAMVWTLDLDDFRGNFCGTGPFPLAHTLNNLLVNDEFSSTPSPKFWFSTAVNSSRIGPEMPTMTRDLTTGLGILPLGGEAVATETHRKSATMTTTPRGETATPTRTPLSSGRRTAAPEGKTESPGEKPLTSVGRLAVSPGGIAVGPVHLQIGQKVTPPGRKAGVPEKVTIPSGKMTVTPDGRAETLERL</sequence>
<evidence type="ECO:0000250" key="1"/>
<evidence type="ECO:0000255" key="2"/>
<evidence type="ECO:0000255" key="3">
    <source>
        <dbReference type="PROSITE-ProRule" id="PRU01258"/>
    </source>
</evidence>
<evidence type="ECO:0000256" key="4">
    <source>
        <dbReference type="SAM" id="MobiDB-lite"/>
    </source>
</evidence>
<evidence type="ECO:0000305" key="5"/>
<reference key="1">
    <citation type="journal article" date="1995" name="Endocrinology">
        <title>An estrogen-dependent secretory protein, which shares identity with chitinases, is expressed in a temporally and regionally specific manner in the sheep oviduct at the time of fertilization and embryo development.</title>
        <authorList>
            <person name="Desouza M.M."/>
            <person name="Murray M.K."/>
        </authorList>
    </citation>
    <scope>NUCLEOTIDE SEQUENCE [MRNA]</scope>
    <scope>PROTEIN SEQUENCE OF 22-39</scope>
    <source>
        <tissue>Oviduct</tissue>
    </source>
</reference>
<reference key="2">
    <citation type="journal article" date="1996" name="Reprod. Fertil. Dev.">
        <title>Cloning and sequencing of a cDNA encoding an ovine oestrus-associated oviducal protein.</title>
        <authorList>
            <person name="Marshall J.T.A."/>
            <person name="Nancarrow C.D."/>
            <person name="Brownlee A.G."/>
        </authorList>
    </citation>
    <scope>NUCLEOTIDE SEQUENCE [MRNA] OF 10-539</scope>
    <source>
        <strain>Merino</strain>
        <tissue>Oviduct</tissue>
    </source>
</reference>
<gene>
    <name type="primary">OVGP1</name>
    <name type="synonym">OGP</name>
</gene>
<accession>Q28542</accession>
<accession>Q28543</accession>
<name>OVGP1_SHEEP</name>
<protein>
    <recommendedName>
        <fullName>Oviduct-specific glycoprotein</fullName>
    </recommendedName>
    <alternativeName>
        <fullName>Estrogen-dependent oviduct protein</fullName>
    </alternativeName>
    <alternativeName>
        <fullName>Estrus-associated oviductal glycoprotein</fullName>
        <shortName>OEGP</shortName>
    </alternativeName>
    <alternativeName>
        <fullName>Oviductal glycoprotein</fullName>
    </alternativeName>
    <alternativeName>
        <fullName>Oviductin</fullName>
    </alternativeName>
</protein>
<feature type="signal peptide" evidence="1">
    <location>
        <begin position="1"/>
        <end position="21"/>
    </location>
</feature>
<feature type="chain" id="PRO_0000011978" description="Oviduct-specific glycoprotein">
    <location>
        <begin position="22"/>
        <end position="539"/>
    </location>
</feature>
<feature type="domain" description="GH18" evidence="3">
    <location>
        <begin position="22"/>
        <end position="385"/>
    </location>
</feature>
<feature type="region of interest" description="Disordered" evidence="4">
    <location>
        <begin position="433"/>
        <end position="480"/>
    </location>
</feature>
<feature type="region of interest" description="Disordered" evidence="4">
    <location>
        <begin position="503"/>
        <end position="539"/>
    </location>
</feature>
<feature type="compositionally biased region" description="Low complexity" evidence="4">
    <location>
        <begin position="440"/>
        <end position="457"/>
    </location>
</feature>
<feature type="binding site" evidence="3">
    <location>
        <begin position="71"/>
        <end position="72"/>
    </location>
    <ligand>
        <name>chitin</name>
        <dbReference type="ChEBI" id="CHEBI:17029"/>
    </ligand>
</feature>
<feature type="binding site" evidence="3">
    <location>
        <begin position="98"/>
        <end position="101"/>
    </location>
    <ligand>
        <name>chitin</name>
        <dbReference type="ChEBI" id="CHEBI:17029"/>
    </ligand>
</feature>
<feature type="binding site" evidence="3">
    <location>
        <position position="142"/>
    </location>
    <ligand>
        <name>chitin</name>
        <dbReference type="ChEBI" id="CHEBI:17029"/>
    </ligand>
</feature>
<feature type="binding site" evidence="3">
    <location>
        <begin position="211"/>
        <end position="214"/>
    </location>
    <ligand>
        <name>chitin</name>
        <dbReference type="ChEBI" id="CHEBI:17029"/>
    </ligand>
</feature>
<feature type="binding site" evidence="3">
    <location>
        <position position="355"/>
    </location>
    <ligand>
        <name>chitin</name>
        <dbReference type="ChEBI" id="CHEBI:17029"/>
    </ligand>
</feature>
<feature type="glycosylation site" description="N-linked (GlcNAc...) asparagine" evidence="2">
    <location>
        <position position="402"/>
    </location>
</feature>
<feature type="disulfide bond" evidence="3">
    <location>
        <begin position="26"/>
        <end position="51"/>
    </location>
</feature>
<feature type="sequence conflict" description="In Ref. 2; AAB01052." evidence="5" ref="2">
    <original>M</original>
    <variation>V</variation>
    <location>
        <position position="13"/>
    </location>
</feature>
<feature type="sequence conflict" description="In Ref. 2; AAB01052." evidence="5" ref="2">
    <original>K</original>
    <variation>N</variation>
    <location>
        <position position="122"/>
    </location>
</feature>
<feature type="sequence conflict" description="In Ref. 2; AAB01052." evidence="5" ref="2">
    <original>A</original>
    <variation>V</variation>
    <location>
        <position position="282"/>
    </location>
</feature>
<feature type="sequence conflict" description="In Ref. 2; AAB01052." evidence="5" ref="2">
    <original>A</original>
    <variation>V</variation>
    <location>
        <position position="375"/>
    </location>
</feature>
<feature type="sequence conflict" description="In Ref. 2; AAB01052." evidence="5" ref="2">
    <original>R</original>
    <variation>H</variation>
    <location>
        <position position="484"/>
    </location>
</feature>
<feature type="sequence conflict" description="In Ref. 2; AAB01052." evidence="5" ref="2">
    <original>I</original>
    <variation>T</variation>
    <location>
        <position position="520"/>
    </location>
</feature>
<organism>
    <name type="scientific">Ovis aries</name>
    <name type="common">Sheep</name>
    <dbReference type="NCBI Taxonomy" id="9940"/>
    <lineage>
        <taxon>Eukaryota</taxon>
        <taxon>Metazoa</taxon>
        <taxon>Chordata</taxon>
        <taxon>Craniata</taxon>
        <taxon>Vertebrata</taxon>
        <taxon>Euteleostomi</taxon>
        <taxon>Mammalia</taxon>
        <taxon>Eutheria</taxon>
        <taxon>Laurasiatheria</taxon>
        <taxon>Artiodactyla</taxon>
        <taxon>Ruminantia</taxon>
        <taxon>Pecora</taxon>
        <taxon>Bovidae</taxon>
        <taxon>Caprinae</taxon>
        <taxon>Ovis</taxon>
    </lineage>
</organism>
<proteinExistence type="evidence at protein level"/>
<dbReference type="EMBL" id="U16719">
    <property type="protein sequence ID" value="AAC48471.1"/>
    <property type="molecule type" value="mRNA"/>
</dbReference>
<dbReference type="EMBL" id="U17988">
    <property type="protein sequence ID" value="AAB01052.1"/>
    <property type="molecule type" value="mRNA"/>
</dbReference>
<dbReference type="PIR" id="I46470">
    <property type="entry name" value="I46470"/>
</dbReference>
<dbReference type="RefSeq" id="NP_001009779.1">
    <property type="nucleotide sequence ID" value="NM_001009779.1"/>
</dbReference>
<dbReference type="SMR" id="Q28542"/>
<dbReference type="STRING" id="9940.ENSOARP00000021050"/>
<dbReference type="CAZy" id="GH18">
    <property type="family name" value="Glycoside Hydrolase Family 18"/>
</dbReference>
<dbReference type="GlyCosmos" id="Q28542">
    <property type="glycosylation" value="1 site, No reported glycans"/>
</dbReference>
<dbReference type="PaxDb" id="9940-ENSOARP00000021050"/>
<dbReference type="GeneID" id="443344"/>
<dbReference type="KEGG" id="oas:443344"/>
<dbReference type="eggNOG" id="KOG2806">
    <property type="taxonomic scope" value="Eukaryota"/>
</dbReference>
<dbReference type="OrthoDB" id="76388at2759"/>
<dbReference type="Proteomes" id="UP000002356">
    <property type="component" value="Unplaced"/>
</dbReference>
<dbReference type="GO" id="GO:0005576">
    <property type="term" value="C:extracellular region"/>
    <property type="evidence" value="ECO:0007669"/>
    <property type="project" value="TreeGrafter"/>
</dbReference>
<dbReference type="GO" id="GO:0030133">
    <property type="term" value="C:transport vesicle"/>
    <property type="evidence" value="ECO:0007669"/>
    <property type="project" value="UniProtKB-SubCell"/>
</dbReference>
<dbReference type="GO" id="GO:0008061">
    <property type="term" value="F:chitin binding"/>
    <property type="evidence" value="ECO:0007669"/>
    <property type="project" value="InterPro"/>
</dbReference>
<dbReference type="GO" id="GO:0004568">
    <property type="term" value="F:chitinase activity"/>
    <property type="evidence" value="ECO:0007669"/>
    <property type="project" value="TreeGrafter"/>
</dbReference>
<dbReference type="GO" id="GO:0005975">
    <property type="term" value="P:carbohydrate metabolic process"/>
    <property type="evidence" value="ECO:0007669"/>
    <property type="project" value="InterPro"/>
</dbReference>
<dbReference type="GO" id="GO:0006032">
    <property type="term" value="P:chitin catabolic process"/>
    <property type="evidence" value="ECO:0007669"/>
    <property type="project" value="TreeGrafter"/>
</dbReference>
<dbReference type="GO" id="GO:0007338">
    <property type="term" value="P:single fertilization"/>
    <property type="evidence" value="ECO:0007669"/>
    <property type="project" value="UniProtKB-KW"/>
</dbReference>
<dbReference type="CDD" id="cd02872">
    <property type="entry name" value="GH18_chitolectin_chitotriosidase"/>
    <property type="match status" value="1"/>
</dbReference>
<dbReference type="FunFam" id="3.20.20.80:FF:000007">
    <property type="entry name" value="Acidic mammalian chitinase"/>
    <property type="match status" value="1"/>
</dbReference>
<dbReference type="FunFam" id="3.10.50.10:FF:000001">
    <property type="entry name" value="Chitinase 3-like 1"/>
    <property type="match status" value="1"/>
</dbReference>
<dbReference type="Gene3D" id="3.10.50.10">
    <property type="match status" value="1"/>
</dbReference>
<dbReference type="Gene3D" id="3.20.20.80">
    <property type="entry name" value="Glycosidases"/>
    <property type="match status" value="1"/>
</dbReference>
<dbReference type="InterPro" id="IPR011583">
    <property type="entry name" value="Chitinase_II/V-like_cat"/>
</dbReference>
<dbReference type="InterPro" id="IPR029070">
    <property type="entry name" value="Chitinase_insertion_sf"/>
</dbReference>
<dbReference type="InterPro" id="IPR001223">
    <property type="entry name" value="Glyco_hydro18_cat"/>
</dbReference>
<dbReference type="InterPro" id="IPR017853">
    <property type="entry name" value="Glycoside_hydrolase_SF"/>
</dbReference>
<dbReference type="InterPro" id="IPR050314">
    <property type="entry name" value="Glycosyl_Hydrlase_18"/>
</dbReference>
<dbReference type="PANTHER" id="PTHR11177">
    <property type="entry name" value="CHITINASE"/>
    <property type="match status" value="1"/>
</dbReference>
<dbReference type="PANTHER" id="PTHR11177:SF385">
    <property type="entry name" value="OVIDUCT-SPECIFIC GLYCOPROTEIN"/>
    <property type="match status" value="1"/>
</dbReference>
<dbReference type="Pfam" id="PF00704">
    <property type="entry name" value="Glyco_hydro_18"/>
    <property type="match status" value="1"/>
</dbReference>
<dbReference type="SMART" id="SM00636">
    <property type="entry name" value="Glyco_18"/>
    <property type="match status" value="1"/>
</dbReference>
<dbReference type="SUPFAM" id="SSF51445">
    <property type="entry name" value="(Trans)glycosidases"/>
    <property type="match status" value="1"/>
</dbReference>
<dbReference type="SUPFAM" id="SSF54556">
    <property type="entry name" value="Chitinase insertion domain"/>
    <property type="match status" value="1"/>
</dbReference>
<dbReference type="PROSITE" id="PS51910">
    <property type="entry name" value="GH18_2"/>
    <property type="match status" value="1"/>
</dbReference>
<keyword id="KW-0968">Cytoplasmic vesicle</keyword>
<keyword id="KW-0903">Direct protein sequencing</keyword>
<keyword id="KW-1015">Disulfide bond</keyword>
<keyword id="KW-0278">Fertilization</keyword>
<keyword id="KW-0325">Glycoprotein</keyword>
<keyword id="KW-1185">Reference proteome</keyword>
<keyword id="KW-0732">Signal</keyword>